<dbReference type="EC" id="2.8.1.13" evidence="1"/>
<dbReference type="EMBL" id="CP001175">
    <property type="protein sequence ID" value="ACK39405.1"/>
    <property type="molecule type" value="Genomic_DNA"/>
</dbReference>
<dbReference type="RefSeq" id="WP_012581287.1">
    <property type="nucleotide sequence ID" value="NC_011660.1"/>
</dbReference>
<dbReference type="SMR" id="B8DDZ8"/>
<dbReference type="KEGG" id="lmh:LMHCC_1057"/>
<dbReference type="HOGENOM" id="CLU_035188_1_0_9"/>
<dbReference type="GO" id="GO:0005737">
    <property type="term" value="C:cytoplasm"/>
    <property type="evidence" value="ECO:0007669"/>
    <property type="project" value="UniProtKB-SubCell"/>
</dbReference>
<dbReference type="GO" id="GO:0005524">
    <property type="term" value="F:ATP binding"/>
    <property type="evidence" value="ECO:0007669"/>
    <property type="project" value="UniProtKB-KW"/>
</dbReference>
<dbReference type="GO" id="GO:0000049">
    <property type="term" value="F:tRNA binding"/>
    <property type="evidence" value="ECO:0007669"/>
    <property type="project" value="UniProtKB-KW"/>
</dbReference>
<dbReference type="GO" id="GO:0103016">
    <property type="term" value="F:tRNA-uridine 2-sulfurtransferase activity"/>
    <property type="evidence" value="ECO:0007669"/>
    <property type="project" value="UniProtKB-EC"/>
</dbReference>
<dbReference type="GO" id="GO:0002143">
    <property type="term" value="P:tRNA wobble position uridine thiolation"/>
    <property type="evidence" value="ECO:0007669"/>
    <property type="project" value="TreeGrafter"/>
</dbReference>
<dbReference type="CDD" id="cd01998">
    <property type="entry name" value="MnmA_TRMU-like"/>
    <property type="match status" value="1"/>
</dbReference>
<dbReference type="FunFam" id="2.30.30.280:FF:000001">
    <property type="entry name" value="tRNA-specific 2-thiouridylase MnmA"/>
    <property type="match status" value="1"/>
</dbReference>
<dbReference type="FunFam" id="2.40.30.10:FF:000023">
    <property type="entry name" value="tRNA-specific 2-thiouridylase MnmA"/>
    <property type="match status" value="1"/>
</dbReference>
<dbReference type="FunFam" id="3.40.50.620:FF:000004">
    <property type="entry name" value="tRNA-specific 2-thiouridylase MnmA"/>
    <property type="match status" value="1"/>
</dbReference>
<dbReference type="Gene3D" id="2.30.30.280">
    <property type="entry name" value="Adenine nucleotide alpha hydrolases-like domains"/>
    <property type="match status" value="1"/>
</dbReference>
<dbReference type="Gene3D" id="3.40.50.620">
    <property type="entry name" value="HUPs"/>
    <property type="match status" value="1"/>
</dbReference>
<dbReference type="Gene3D" id="2.40.30.10">
    <property type="entry name" value="Translation factors"/>
    <property type="match status" value="1"/>
</dbReference>
<dbReference type="HAMAP" id="MF_00144">
    <property type="entry name" value="tRNA_thiouridyl_MnmA"/>
    <property type="match status" value="1"/>
</dbReference>
<dbReference type="InterPro" id="IPR004506">
    <property type="entry name" value="MnmA-like"/>
</dbReference>
<dbReference type="InterPro" id="IPR046885">
    <property type="entry name" value="MnmA-like_C"/>
</dbReference>
<dbReference type="InterPro" id="IPR046884">
    <property type="entry name" value="MnmA-like_central"/>
</dbReference>
<dbReference type="InterPro" id="IPR023382">
    <property type="entry name" value="MnmA-like_central_sf"/>
</dbReference>
<dbReference type="InterPro" id="IPR014729">
    <property type="entry name" value="Rossmann-like_a/b/a_fold"/>
</dbReference>
<dbReference type="NCBIfam" id="NF001138">
    <property type="entry name" value="PRK00143.1"/>
    <property type="match status" value="1"/>
</dbReference>
<dbReference type="NCBIfam" id="TIGR00420">
    <property type="entry name" value="trmU"/>
    <property type="match status" value="1"/>
</dbReference>
<dbReference type="PANTHER" id="PTHR11933:SF5">
    <property type="entry name" value="MITOCHONDRIAL TRNA-SPECIFIC 2-THIOURIDYLASE 1"/>
    <property type="match status" value="1"/>
</dbReference>
<dbReference type="PANTHER" id="PTHR11933">
    <property type="entry name" value="TRNA 5-METHYLAMINOMETHYL-2-THIOURIDYLATE -METHYLTRANSFERASE"/>
    <property type="match status" value="1"/>
</dbReference>
<dbReference type="Pfam" id="PF03054">
    <property type="entry name" value="tRNA_Me_trans"/>
    <property type="match status" value="1"/>
</dbReference>
<dbReference type="Pfam" id="PF20258">
    <property type="entry name" value="tRNA_Me_trans_C"/>
    <property type="match status" value="1"/>
</dbReference>
<dbReference type="Pfam" id="PF20259">
    <property type="entry name" value="tRNA_Me_trans_M"/>
    <property type="match status" value="1"/>
</dbReference>
<dbReference type="SUPFAM" id="SSF52402">
    <property type="entry name" value="Adenine nucleotide alpha hydrolases-like"/>
    <property type="match status" value="1"/>
</dbReference>
<comment type="function">
    <text evidence="1">Catalyzes the 2-thiolation of uridine at the wobble position (U34) of tRNA, leading to the formation of s(2)U34.</text>
</comment>
<comment type="catalytic activity">
    <reaction evidence="1">
        <text>S-sulfanyl-L-cysteinyl-[protein] + uridine(34) in tRNA + AH2 + ATP = 2-thiouridine(34) in tRNA + L-cysteinyl-[protein] + A + AMP + diphosphate + H(+)</text>
        <dbReference type="Rhea" id="RHEA:47032"/>
        <dbReference type="Rhea" id="RHEA-COMP:10131"/>
        <dbReference type="Rhea" id="RHEA-COMP:11726"/>
        <dbReference type="Rhea" id="RHEA-COMP:11727"/>
        <dbReference type="Rhea" id="RHEA-COMP:11728"/>
        <dbReference type="ChEBI" id="CHEBI:13193"/>
        <dbReference type="ChEBI" id="CHEBI:15378"/>
        <dbReference type="ChEBI" id="CHEBI:17499"/>
        <dbReference type="ChEBI" id="CHEBI:29950"/>
        <dbReference type="ChEBI" id="CHEBI:30616"/>
        <dbReference type="ChEBI" id="CHEBI:33019"/>
        <dbReference type="ChEBI" id="CHEBI:61963"/>
        <dbReference type="ChEBI" id="CHEBI:65315"/>
        <dbReference type="ChEBI" id="CHEBI:87170"/>
        <dbReference type="ChEBI" id="CHEBI:456215"/>
        <dbReference type="EC" id="2.8.1.13"/>
    </reaction>
</comment>
<comment type="subcellular location">
    <subcellularLocation>
        <location evidence="1">Cytoplasm</location>
    </subcellularLocation>
</comment>
<comment type="similarity">
    <text evidence="1">Belongs to the MnmA/TRMU family.</text>
</comment>
<protein>
    <recommendedName>
        <fullName evidence="1">tRNA-specific 2-thiouridylase MnmA</fullName>
        <ecNumber evidence="1">2.8.1.13</ecNumber>
    </recommendedName>
</protein>
<feature type="chain" id="PRO_1000198614" description="tRNA-specific 2-thiouridylase MnmA">
    <location>
        <begin position="1"/>
        <end position="371"/>
    </location>
</feature>
<feature type="region of interest" description="Interaction with target base in tRNA" evidence="1">
    <location>
        <begin position="99"/>
        <end position="101"/>
    </location>
</feature>
<feature type="region of interest" description="Interaction with tRNA" evidence="1">
    <location>
        <begin position="150"/>
        <end position="152"/>
    </location>
</feature>
<feature type="region of interest" description="Interaction with tRNA" evidence="1">
    <location>
        <begin position="308"/>
        <end position="309"/>
    </location>
</feature>
<feature type="active site" description="Nucleophile" evidence="1">
    <location>
        <position position="104"/>
    </location>
</feature>
<feature type="active site" description="Cysteine persulfide intermediate" evidence="1">
    <location>
        <position position="200"/>
    </location>
</feature>
<feature type="binding site" evidence="1">
    <location>
        <begin position="13"/>
        <end position="20"/>
    </location>
    <ligand>
        <name>ATP</name>
        <dbReference type="ChEBI" id="CHEBI:30616"/>
    </ligand>
</feature>
<feature type="binding site" evidence="1">
    <location>
        <position position="39"/>
    </location>
    <ligand>
        <name>ATP</name>
        <dbReference type="ChEBI" id="CHEBI:30616"/>
    </ligand>
</feature>
<feature type="binding site" evidence="1">
    <location>
        <position position="128"/>
    </location>
    <ligand>
        <name>ATP</name>
        <dbReference type="ChEBI" id="CHEBI:30616"/>
    </ligand>
</feature>
<feature type="site" description="Interaction with tRNA" evidence="1">
    <location>
        <position position="129"/>
    </location>
</feature>
<feature type="site" description="Interaction with tRNA" evidence="1">
    <location>
        <position position="341"/>
    </location>
</feature>
<feature type="disulfide bond" description="Alternate" evidence="1">
    <location>
        <begin position="104"/>
        <end position="200"/>
    </location>
</feature>
<name>MNMA_LISMH</name>
<sequence>MSTNNSDIRVVVGMSGGVDSSVTAHILKEQGYDVIGIFMKNWDDTDEFGVCTATEDYDDVIRVANQIGIPYYAVNFEKEYWDKVFTYFLDEYKLGRTPNPDVMCNKEIKFKAFLEHAESLGADFVATGHYAQVKKVGDEIELLRGVDNNKDQTYFLNQLSQDQLKKVMFPLGAMEKTEVREIAKKAGLATANKKDSTGICFIGERNFKQFLSEYLPAQPGEMRTLNGEVLGKHDGLMYYTIGQRHGLGIGGDGEPWFVVGKDLKENVLFVEQGFHHETLYSDSLIATDISFTTNAAKPKTIECTAKFRYRQTDTKVTVHLREDGTAEVVFADPVRAITPGQAVVFYDGDICLGGGTIDTVWKNGAKLNYVG</sequence>
<proteinExistence type="inferred from homology"/>
<reference key="1">
    <citation type="journal article" date="2011" name="J. Bacteriol.">
        <title>Genome sequence of lineage III Listeria monocytogenes strain HCC23.</title>
        <authorList>
            <person name="Steele C.L."/>
            <person name="Donaldson J.R."/>
            <person name="Paul D."/>
            <person name="Banes M.M."/>
            <person name="Arick T."/>
            <person name="Bridges S.M."/>
            <person name="Lawrence M.L."/>
        </authorList>
    </citation>
    <scope>NUCLEOTIDE SEQUENCE [LARGE SCALE GENOMIC DNA]</scope>
    <source>
        <strain>HCC23</strain>
    </source>
</reference>
<organism>
    <name type="scientific">Listeria monocytogenes serotype 4a (strain HCC23)</name>
    <dbReference type="NCBI Taxonomy" id="552536"/>
    <lineage>
        <taxon>Bacteria</taxon>
        <taxon>Bacillati</taxon>
        <taxon>Bacillota</taxon>
        <taxon>Bacilli</taxon>
        <taxon>Bacillales</taxon>
        <taxon>Listeriaceae</taxon>
        <taxon>Listeria</taxon>
    </lineage>
</organism>
<accession>B8DDZ8</accession>
<evidence type="ECO:0000255" key="1">
    <source>
        <dbReference type="HAMAP-Rule" id="MF_00144"/>
    </source>
</evidence>
<gene>
    <name evidence="1" type="primary">mnmA</name>
    <name type="ordered locus">LMHCC_1057</name>
</gene>
<keyword id="KW-0067">ATP-binding</keyword>
<keyword id="KW-0963">Cytoplasm</keyword>
<keyword id="KW-1015">Disulfide bond</keyword>
<keyword id="KW-0547">Nucleotide-binding</keyword>
<keyword id="KW-0694">RNA-binding</keyword>
<keyword id="KW-0808">Transferase</keyword>
<keyword id="KW-0819">tRNA processing</keyword>
<keyword id="KW-0820">tRNA-binding</keyword>